<evidence type="ECO:0000250" key="1">
    <source>
        <dbReference type="UniProtKB" id="Q96DW6"/>
    </source>
</evidence>
<evidence type="ECO:0000255" key="2">
    <source>
        <dbReference type="HAMAP-Rule" id="MF_03064"/>
    </source>
</evidence>
<organism>
    <name type="scientific">Neosartorya fischeri (strain ATCC 1020 / DSM 3700 / CBS 544.65 / FGSC A1164 / JCM 1740 / NRRL 181 / WB 181)</name>
    <name type="common">Aspergillus fischerianus</name>
    <dbReference type="NCBI Taxonomy" id="331117"/>
    <lineage>
        <taxon>Eukaryota</taxon>
        <taxon>Fungi</taxon>
        <taxon>Dikarya</taxon>
        <taxon>Ascomycota</taxon>
        <taxon>Pezizomycotina</taxon>
        <taxon>Eurotiomycetes</taxon>
        <taxon>Eurotiomycetidae</taxon>
        <taxon>Eurotiales</taxon>
        <taxon>Aspergillaceae</taxon>
        <taxon>Aspergillus</taxon>
        <taxon>Aspergillus subgen. Fumigati</taxon>
    </lineage>
</organism>
<keyword id="KW-0472">Membrane</keyword>
<keyword id="KW-0496">Mitochondrion</keyword>
<keyword id="KW-0999">Mitochondrion inner membrane</keyword>
<keyword id="KW-1185">Reference proteome</keyword>
<keyword id="KW-0677">Repeat</keyword>
<keyword id="KW-0812">Transmembrane</keyword>
<keyword id="KW-1133">Transmembrane helix</keyword>
<keyword id="KW-0813">Transport</keyword>
<sequence>MSNNAAYAVTPVKTTSTSSRTTFHFAAGLCSGLTSSILLQPADLLKTRVQQSQKTASLLPTIKTILSSPHPIRGLWRGTLPSALRTGFGSALYFTSLNALRQGLAQTEASMAIAASSSDGKSRTSSSALPKLSNWGNLATGAVARTAAGFVMMPVTVLKVRYESDYYAYRSLYSAGRDIVRTEGVRGLFSGFGATAARDAPYAGLYVLFYEQLKRRLASVASSEQSEQPLKSTSSSSINFVSGGLAAGLATAITNPFDAVKTRLQLMPGKYGNMIRAVRLMIREDGVRSLFGGLGLRITRKALSSALAWTVYEELILRAEAHWAEKDKIDL</sequence>
<proteinExistence type="inferred from homology"/>
<comment type="function">
    <text evidence="2">Mitochondrial glycine transporter that imports glycine into the mitochondrial matrix. Plays an important role in providing glycine for the first enzymatic step in heme biosynthesis, the condensation of glycine with succinyl-CoA to produce 5-aminolevulinate (ALA) in the mitochondrial matrix.</text>
</comment>
<comment type="catalytic activity">
    <reaction evidence="1">
        <text>glycine(in) = glycine(out)</text>
        <dbReference type="Rhea" id="RHEA:70715"/>
        <dbReference type="ChEBI" id="CHEBI:57305"/>
    </reaction>
</comment>
<comment type="subcellular location">
    <subcellularLocation>
        <location evidence="2">Mitochondrion inner membrane</location>
        <topology evidence="2">Multi-pass membrane protein</topology>
    </subcellularLocation>
</comment>
<comment type="similarity">
    <text evidence="2">Belongs to the mitochondrial carrier (TC 2.A.29) family. SLC25A38 subfamily.</text>
</comment>
<accession>A1CWA4</accession>
<gene>
    <name type="ORF">NFIA_103940</name>
</gene>
<feature type="chain" id="PRO_0000378939" description="Mitochondrial glycine transporter">
    <location>
        <begin position="1"/>
        <end position="331"/>
    </location>
</feature>
<feature type="transmembrane region" description="Helical; Name=1" evidence="2">
    <location>
        <begin position="25"/>
        <end position="50"/>
    </location>
</feature>
<feature type="transmembrane region" description="Helical; Name=2" evidence="2">
    <location>
        <begin position="78"/>
        <end position="104"/>
    </location>
</feature>
<feature type="transmembrane region" description="Helical; Name=3" evidence="2">
    <location>
        <begin position="138"/>
        <end position="163"/>
    </location>
</feature>
<feature type="transmembrane region" description="Helical; Name=4" evidence="2">
    <location>
        <begin position="191"/>
        <end position="214"/>
    </location>
</feature>
<feature type="transmembrane region" description="Helical; Name=5" evidence="2">
    <location>
        <begin position="238"/>
        <end position="264"/>
    </location>
</feature>
<feature type="transmembrane region" description="Helical; Name=6" evidence="2">
    <location>
        <begin position="293"/>
        <end position="311"/>
    </location>
</feature>
<feature type="repeat" description="Solcar 1" evidence="2">
    <location>
        <begin position="19"/>
        <end position="103"/>
    </location>
</feature>
<feature type="repeat" description="Solcar 2" evidence="2">
    <location>
        <begin position="132"/>
        <end position="216"/>
    </location>
</feature>
<feature type="repeat" description="Solcar 3" evidence="2">
    <location>
        <begin position="234"/>
        <end position="318"/>
    </location>
</feature>
<protein>
    <recommendedName>
        <fullName evidence="2">Mitochondrial glycine transporter</fullName>
    </recommendedName>
    <alternativeName>
        <fullName evidence="2">Solute carrier family 25 member 38 homolog</fullName>
    </alternativeName>
</protein>
<reference key="1">
    <citation type="journal article" date="2008" name="PLoS Genet.">
        <title>Genomic islands in the pathogenic filamentous fungus Aspergillus fumigatus.</title>
        <authorList>
            <person name="Fedorova N.D."/>
            <person name="Khaldi N."/>
            <person name="Joardar V.S."/>
            <person name="Maiti R."/>
            <person name="Amedeo P."/>
            <person name="Anderson M.J."/>
            <person name="Crabtree J."/>
            <person name="Silva J.C."/>
            <person name="Badger J.H."/>
            <person name="Albarraq A."/>
            <person name="Angiuoli S."/>
            <person name="Bussey H."/>
            <person name="Bowyer P."/>
            <person name="Cotty P.J."/>
            <person name="Dyer P.S."/>
            <person name="Egan A."/>
            <person name="Galens K."/>
            <person name="Fraser-Liggett C.M."/>
            <person name="Haas B.J."/>
            <person name="Inman J.M."/>
            <person name="Kent R."/>
            <person name="Lemieux S."/>
            <person name="Malavazi I."/>
            <person name="Orvis J."/>
            <person name="Roemer T."/>
            <person name="Ronning C.M."/>
            <person name="Sundaram J.P."/>
            <person name="Sutton G."/>
            <person name="Turner G."/>
            <person name="Venter J.C."/>
            <person name="White O.R."/>
            <person name="Whitty B.R."/>
            <person name="Youngman P."/>
            <person name="Wolfe K.H."/>
            <person name="Goldman G.H."/>
            <person name="Wortman J.R."/>
            <person name="Jiang B."/>
            <person name="Denning D.W."/>
            <person name="Nierman W.C."/>
        </authorList>
    </citation>
    <scope>NUCLEOTIDE SEQUENCE [LARGE SCALE GENOMIC DNA]</scope>
    <source>
        <strain>ATCC 1020 / DSM 3700 / CBS 544.65 / FGSC A1164 / JCM 1740 / NRRL 181 / WB 181</strain>
    </source>
</reference>
<name>S2538_NEOFI</name>
<dbReference type="EMBL" id="DS027685">
    <property type="protein sequence ID" value="EAW24906.1"/>
    <property type="molecule type" value="Genomic_DNA"/>
</dbReference>
<dbReference type="RefSeq" id="XP_001266803.1">
    <property type="nucleotide sequence ID" value="XM_001266802.1"/>
</dbReference>
<dbReference type="SMR" id="A1CWA4"/>
<dbReference type="STRING" id="331117.A1CWA4"/>
<dbReference type="EnsemblFungi" id="EAW24906">
    <property type="protein sequence ID" value="EAW24906"/>
    <property type="gene ID" value="NFIA_103940"/>
</dbReference>
<dbReference type="GeneID" id="4594116"/>
<dbReference type="KEGG" id="nfi:NFIA_103940"/>
<dbReference type="VEuPathDB" id="FungiDB:NFIA_103940"/>
<dbReference type="eggNOG" id="KOG0766">
    <property type="taxonomic scope" value="Eukaryota"/>
</dbReference>
<dbReference type="HOGENOM" id="CLU_015166_0_3_1"/>
<dbReference type="OMA" id="WGIYEEL"/>
<dbReference type="OrthoDB" id="1924968at2759"/>
<dbReference type="Proteomes" id="UP000006702">
    <property type="component" value="Unassembled WGS sequence"/>
</dbReference>
<dbReference type="GO" id="GO:0005743">
    <property type="term" value="C:mitochondrial inner membrane"/>
    <property type="evidence" value="ECO:0007669"/>
    <property type="project" value="UniProtKB-SubCell"/>
</dbReference>
<dbReference type="GO" id="GO:0015187">
    <property type="term" value="F:glycine transmembrane transporter activity"/>
    <property type="evidence" value="ECO:0007669"/>
    <property type="project" value="UniProtKB-UniRule"/>
</dbReference>
<dbReference type="GO" id="GO:1904983">
    <property type="term" value="P:glycine import into mitochondrion"/>
    <property type="evidence" value="ECO:0007669"/>
    <property type="project" value="UniProtKB-UniRule"/>
</dbReference>
<dbReference type="GO" id="GO:0006783">
    <property type="term" value="P:heme biosynthetic process"/>
    <property type="evidence" value="ECO:0007669"/>
    <property type="project" value="EnsemblFungi"/>
</dbReference>
<dbReference type="FunFam" id="1.50.40.10:FF:000103">
    <property type="entry name" value="Mitochondrial glycine transporter"/>
    <property type="match status" value="1"/>
</dbReference>
<dbReference type="Gene3D" id="1.50.40.10">
    <property type="entry name" value="Mitochondrial carrier domain"/>
    <property type="match status" value="1"/>
</dbReference>
<dbReference type="HAMAP" id="MF_03064">
    <property type="entry name" value="SLC25A38"/>
    <property type="match status" value="1"/>
</dbReference>
<dbReference type="InterPro" id="IPR030847">
    <property type="entry name" value="Hem25/SLC25A38"/>
</dbReference>
<dbReference type="InterPro" id="IPR018108">
    <property type="entry name" value="Mitochondrial_sb/sol_carrier"/>
</dbReference>
<dbReference type="InterPro" id="IPR023395">
    <property type="entry name" value="Mt_carrier_dom_sf"/>
</dbReference>
<dbReference type="PANTHER" id="PTHR46181">
    <property type="entry name" value="MITOCHONDRIAL GLYCINE TRANSPORTER"/>
    <property type="match status" value="1"/>
</dbReference>
<dbReference type="PANTHER" id="PTHR46181:SF3">
    <property type="entry name" value="MITOCHONDRIAL GLYCINE TRANSPORTER"/>
    <property type="match status" value="1"/>
</dbReference>
<dbReference type="Pfam" id="PF00153">
    <property type="entry name" value="Mito_carr"/>
    <property type="match status" value="3"/>
</dbReference>
<dbReference type="SUPFAM" id="SSF103506">
    <property type="entry name" value="Mitochondrial carrier"/>
    <property type="match status" value="1"/>
</dbReference>
<dbReference type="PROSITE" id="PS50920">
    <property type="entry name" value="SOLCAR"/>
    <property type="match status" value="3"/>
</dbReference>